<evidence type="ECO:0000255" key="1">
    <source>
        <dbReference type="HAMAP-Rule" id="MF_00017"/>
    </source>
</evidence>
<sequence length="200" mass="22075">MQSSPLLENLVEHLRCLPGVGPKSAQRMAYHLLQRDRSGGMNLARALTDAMSKIGHCSQCRTFTEQETCAICDNPRRQHSGLLCVVEMPADIQAIEQTGQFSGRYFVLMGHLSPLDGIGPREIGLDLLQQRLQNEHFHEVILATNPTIEGDATANYIAEMCMQRNIKVSRIAHGIPVGGELETVDGTTLTHSFLGRRELG</sequence>
<proteinExistence type="inferred from homology"/>
<comment type="function">
    <text evidence="1">May play a role in DNA repair. It seems to be involved in an RecBC-independent recombinational process of DNA repair. It may act with RecF and RecO.</text>
</comment>
<comment type="similarity">
    <text evidence="1">Belongs to the RecR family.</text>
</comment>
<organism>
    <name type="scientific">Actinobacillus succinogenes (strain ATCC 55618 / DSM 22257 / CCUG 43843 / 130Z)</name>
    <dbReference type="NCBI Taxonomy" id="339671"/>
    <lineage>
        <taxon>Bacteria</taxon>
        <taxon>Pseudomonadati</taxon>
        <taxon>Pseudomonadota</taxon>
        <taxon>Gammaproteobacteria</taxon>
        <taxon>Pasteurellales</taxon>
        <taxon>Pasteurellaceae</taxon>
        <taxon>Actinobacillus</taxon>
    </lineage>
</organism>
<gene>
    <name evidence="1" type="primary">recR</name>
    <name type="ordered locus">Asuc_0998</name>
</gene>
<keyword id="KW-0227">DNA damage</keyword>
<keyword id="KW-0233">DNA recombination</keyword>
<keyword id="KW-0234">DNA repair</keyword>
<keyword id="KW-0479">Metal-binding</keyword>
<keyword id="KW-1185">Reference proteome</keyword>
<keyword id="KW-0862">Zinc</keyword>
<keyword id="KW-0863">Zinc-finger</keyword>
<feature type="chain" id="PRO_1000070973" description="Recombination protein RecR">
    <location>
        <begin position="1"/>
        <end position="200"/>
    </location>
</feature>
<feature type="domain" description="Toprim" evidence="1">
    <location>
        <begin position="81"/>
        <end position="176"/>
    </location>
</feature>
<feature type="zinc finger region" description="C4-type" evidence="1">
    <location>
        <begin position="57"/>
        <end position="72"/>
    </location>
</feature>
<reference key="1">
    <citation type="journal article" date="2010" name="BMC Genomics">
        <title>A genomic perspective on the potential of Actinobacillus succinogenes for industrial succinate production.</title>
        <authorList>
            <person name="McKinlay J.B."/>
            <person name="Laivenieks M."/>
            <person name="Schindler B.D."/>
            <person name="McKinlay A.A."/>
            <person name="Siddaramappa S."/>
            <person name="Challacombe J.F."/>
            <person name="Lowry S.R."/>
            <person name="Clum A."/>
            <person name="Lapidus A.L."/>
            <person name="Burkhart K.B."/>
            <person name="Harkins V."/>
            <person name="Vieille C."/>
        </authorList>
    </citation>
    <scope>NUCLEOTIDE SEQUENCE [LARGE SCALE GENOMIC DNA]</scope>
    <source>
        <strain>ATCC 55618 / DSM 22257 / CCUG 43843 / 130Z</strain>
    </source>
</reference>
<accession>A6VN19</accession>
<name>RECR_ACTSZ</name>
<dbReference type="EMBL" id="CP000746">
    <property type="protein sequence ID" value="ABR74366.1"/>
    <property type="molecule type" value="Genomic_DNA"/>
</dbReference>
<dbReference type="RefSeq" id="WP_012072743.1">
    <property type="nucleotide sequence ID" value="NC_009655.1"/>
</dbReference>
<dbReference type="SMR" id="A6VN19"/>
<dbReference type="STRING" id="339671.Asuc_0998"/>
<dbReference type="KEGG" id="asu:Asuc_0998"/>
<dbReference type="eggNOG" id="COG0353">
    <property type="taxonomic scope" value="Bacteria"/>
</dbReference>
<dbReference type="HOGENOM" id="CLU_060739_1_2_6"/>
<dbReference type="OrthoDB" id="9802672at2"/>
<dbReference type="Proteomes" id="UP000001114">
    <property type="component" value="Chromosome"/>
</dbReference>
<dbReference type="GO" id="GO:0003677">
    <property type="term" value="F:DNA binding"/>
    <property type="evidence" value="ECO:0007669"/>
    <property type="project" value="UniProtKB-UniRule"/>
</dbReference>
<dbReference type="GO" id="GO:0008270">
    <property type="term" value="F:zinc ion binding"/>
    <property type="evidence" value="ECO:0007669"/>
    <property type="project" value="UniProtKB-KW"/>
</dbReference>
<dbReference type="GO" id="GO:0006310">
    <property type="term" value="P:DNA recombination"/>
    <property type="evidence" value="ECO:0007669"/>
    <property type="project" value="UniProtKB-UniRule"/>
</dbReference>
<dbReference type="GO" id="GO:0006281">
    <property type="term" value="P:DNA repair"/>
    <property type="evidence" value="ECO:0007669"/>
    <property type="project" value="UniProtKB-UniRule"/>
</dbReference>
<dbReference type="CDD" id="cd01025">
    <property type="entry name" value="TOPRIM_recR"/>
    <property type="match status" value="1"/>
</dbReference>
<dbReference type="FunFam" id="1.10.8.420:FF:000001">
    <property type="entry name" value="Recombination protein RecR"/>
    <property type="match status" value="1"/>
</dbReference>
<dbReference type="FunFam" id="3.40.1360.10:FF:000001">
    <property type="entry name" value="Recombination protein RecR"/>
    <property type="match status" value="1"/>
</dbReference>
<dbReference type="Gene3D" id="3.40.1360.10">
    <property type="match status" value="1"/>
</dbReference>
<dbReference type="Gene3D" id="6.10.250.240">
    <property type="match status" value="1"/>
</dbReference>
<dbReference type="Gene3D" id="1.10.8.420">
    <property type="entry name" value="RecR Domain 1"/>
    <property type="match status" value="1"/>
</dbReference>
<dbReference type="HAMAP" id="MF_00017">
    <property type="entry name" value="RecR"/>
    <property type="match status" value="1"/>
</dbReference>
<dbReference type="InterPro" id="IPR000093">
    <property type="entry name" value="DNA_Rcmb_RecR"/>
</dbReference>
<dbReference type="InterPro" id="IPR023627">
    <property type="entry name" value="Rcmb_RecR"/>
</dbReference>
<dbReference type="InterPro" id="IPR015967">
    <property type="entry name" value="Rcmb_RecR_Znf"/>
</dbReference>
<dbReference type="InterPro" id="IPR006171">
    <property type="entry name" value="TOPRIM_dom"/>
</dbReference>
<dbReference type="InterPro" id="IPR034137">
    <property type="entry name" value="TOPRIM_RecR"/>
</dbReference>
<dbReference type="NCBIfam" id="TIGR00615">
    <property type="entry name" value="recR"/>
    <property type="match status" value="1"/>
</dbReference>
<dbReference type="PANTHER" id="PTHR30446">
    <property type="entry name" value="RECOMBINATION PROTEIN RECR"/>
    <property type="match status" value="1"/>
</dbReference>
<dbReference type="PANTHER" id="PTHR30446:SF0">
    <property type="entry name" value="RECOMBINATION PROTEIN RECR"/>
    <property type="match status" value="1"/>
</dbReference>
<dbReference type="Pfam" id="PF21175">
    <property type="entry name" value="RecR_C"/>
    <property type="match status" value="1"/>
</dbReference>
<dbReference type="Pfam" id="PF21176">
    <property type="entry name" value="RecR_HhH"/>
    <property type="match status" value="1"/>
</dbReference>
<dbReference type="Pfam" id="PF02132">
    <property type="entry name" value="RecR_ZnF"/>
    <property type="match status" value="1"/>
</dbReference>
<dbReference type="Pfam" id="PF13662">
    <property type="entry name" value="Toprim_4"/>
    <property type="match status" value="1"/>
</dbReference>
<dbReference type="SMART" id="SM00493">
    <property type="entry name" value="TOPRIM"/>
    <property type="match status" value="1"/>
</dbReference>
<dbReference type="SUPFAM" id="SSF111304">
    <property type="entry name" value="Recombination protein RecR"/>
    <property type="match status" value="1"/>
</dbReference>
<dbReference type="PROSITE" id="PS01300">
    <property type="entry name" value="RECR"/>
    <property type="match status" value="1"/>
</dbReference>
<dbReference type="PROSITE" id="PS50880">
    <property type="entry name" value="TOPRIM"/>
    <property type="match status" value="1"/>
</dbReference>
<protein>
    <recommendedName>
        <fullName evidence="1">Recombination protein RecR</fullName>
    </recommendedName>
</protein>